<keyword id="KW-0028">Amino-acid biosynthesis</keyword>
<keyword id="KW-0963">Cytoplasm</keyword>
<keyword id="KW-0368">Histidine biosynthesis</keyword>
<keyword id="KW-0456">Lyase</keyword>
<reference key="1">
    <citation type="journal article" date="2011" name="J. Bacteriol.">
        <title>Genome sequence of lineage III Listeria monocytogenes strain HCC23.</title>
        <authorList>
            <person name="Steele C.L."/>
            <person name="Donaldson J.R."/>
            <person name="Paul D."/>
            <person name="Banes M.M."/>
            <person name="Arick T."/>
            <person name="Bridges S.M."/>
            <person name="Lawrence M.L."/>
        </authorList>
    </citation>
    <scope>NUCLEOTIDE SEQUENCE [LARGE SCALE GENOMIC DNA]</scope>
    <source>
        <strain>HCC23</strain>
    </source>
</reference>
<dbReference type="EC" id="4.2.1.19" evidence="1"/>
<dbReference type="EMBL" id="CP001175">
    <property type="protein sequence ID" value="ACK40404.1"/>
    <property type="molecule type" value="Genomic_DNA"/>
</dbReference>
<dbReference type="RefSeq" id="WP_003729307.1">
    <property type="nucleotide sequence ID" value="NC_011660.1"/>
</dbReference>
<dbReference type="SMR" id="B8DA59"/>
<dbReference type="KEGG" id="lmh:LMHCC_2065"/>
<dbReference type="HOGENOM" id="CLU_044308_3_0_9"/>
<dbReference type="UniPathway" id="UPA00031">
    <property type="reaction ID" value="UER00011"/>
</dbReference>
<dbReference type="GO" id="GO:0005737">
    <property type="term" value="C:cytoplasm"/>
    <property type="evidence" value="ECO:0007669"/>
    <property type="project" value="UniProtKB-SubCell"/>
</dbReference>
<dbReference type="GO" id="GO:0004424">
    <property type="term" value="F:imidazoleglycerol-phosphate dehydratase activity"/>
    <property type="evidence" value="ECO:0007669"/>
    <property type="project" value="UniProtKB-UniRule"/>
</dbReference>
<dbReference type="GO" id="GO:0000105">
    <property type="term" value="P:L-histidine biosynthetic process"/>
    <property type="evidence" value="ECO:0007669"/>
    <property type="project" value="UniProtKB-UniRule"/>
</dbReference>
<dbReference type="CDD" id="cd07914">
    <property type="entry name" value="IGPD"/>
    <property type="match status" value="1"/>
</dbReference>
<dbReference type="FunFam" id="3.30.230.40:FF:000001">
    <property type="entry name" value="Imidazoleglycerol-phosphate dehydratase HisB"/>
    <property type="match status" value="1"/>
</dbReference>
<dbReference type="FunFam" id="3.30.230.40:FF:000003">
    <property type="entry name" value="Imidazoleglycerol-phosphate dehydratase HisB"/>
    <property type="match status" value="1"/>
</dbReference>
<dbReference type="Gene3D" id="3.30.230.40">
    <property type="entry name" value="Imidazole glycerol phosphate dehydratase, domain 1"/>
    <property type="match status" value="2"/>
</dbReference>
<dbReference type="HAMAP" id="MF_00076">
    <property type="entry name" value="HisB"/>
    <property type="match status" value="1"/>
</dbReference>
<dbReference type="InterPro" id="IPR038494">
    <property type="entry name" value="IGPD_sf"/>
</dbReference>
<dbReference type="InterPro" id="IPR000807">
    <property type="entry name" value="ImidazoleglycerolP_deHydtase"/>
</dbReference>
<dbReference type="InterPro" id="IPR020565">
    <property type="entry name" value="ImidazoleglycerP_deHydtase_CS"/>
</dbReference>
<dbReference type="InterPro" id="IPR020568">
    <property type="entry name" value="Ribosomal_Su5_D2-typ_SF"/>
</dbReference>
<dbReference type="NCBIfam" id="NF002107">
    <property type="entry name" value="PRK00951.1-2"/>
    <property type="match status" value="1"/>
</dbReference>
<dbReference type="NCBIfam" id="NF002111">
    <property type="entry name" value="PRK00951.2-1"/>
    <property type="match status" value="1"/>
</dbReference>
<dbReference type="NCBIfam" id="NF002114">
    <property type="entry name" value="PRK00951.2-4"/>
    <property type="match status" value="1"/>
</dbReference>
<dbReference type="PANTHER" id="PTHR23133:SF2">
    <property type="entry name" value="IMIDAZOLEGLYCEROL-PHOSPHATE DEHYDRATASE"/>
    <property type="match status" value="1"/>
</dbReference>
<dbReference type="PANTHER" id="PTHR23133">
    <property type="entry name" value="IMIDAZOLEGLYCEROL-PHOSPHATE DEHYDRATASE HIS7"/>
    <property type="match status" value="1"/>
</dbReference>
<dbReference type="Pfam" id="PF00475">
    <property type="entry name" value="IGPD"/>
    <property type="match status" value="1"/>
</dbReference>
<dbReference type="SUPFAM" id="SSF54211">
    <property type="entry name" value="Ribosomal protein S5 domain 2-like"/>
    <property type="match status" value="2"/>
</dbReference>
<dbReference type="PROSITE" id="PS00954">
    <property type="entry name" value="IGP_DEHYDRATASE_1"/>
    <property type="match status" value="1"/>
</dbReference>
<dbReference type="PROSITE" id="PS00955">
    <property type="entry name" value="IGP_DEHYDRATASE_2"/>
    <property type="match status" value="1"/>
</dbReference>
<name>HIS7_LISMH</name>
<sequence>MRTATKTRVTAETSIELSINLDSQTESTISTGVGFLDHMLTLFAKHSRVTLNVKADGDTYVDAHHTVEDIGITLGLCLKEALADKASINRYGSSYVPMDESLGFCALDLSGRSYLVFDAELTNPKLGDFDTELVEEFFQAVAFNTEMNLHLRVLYGKNTHHKIEALFKAFGRALREAITINPEIKGVNSTKGVL</sequence>
<accession>B8DA59</accession>
<gene>
    <name evidence="1" type="primary">hisB</name>
    <name type="ordered locus">LMHCC_2065</name>
</gene>
<comment type="catalytic activity">
    <reaction evidence="1">
        <text>D-erythro-1-(imidazol-4-yl)glycerol 3-phosphate = 3-(imidazol-4-yl)-2-oxopropyl phosphate + H2O</text>
        <dbReference type="Rhea" id="RHEA:11040"/>
        <dbReference type="ChEBI" id="CHEBI:15377"/>
        <dbReference type="ChEBI" id="CHEBI:57766"/>
        <dbReference type="ChEBI" id="CHEBI:58278"/>
        <dbReference type="EC" id="4.2.1.19"/>
    </reaction>
</comment>
<comment type="pathway">
    <text evidence="1">Amino-acid biosynthesis; L-histidine biosynthesis; L-histidine from 5-phospho-alpha-D-ribose 1-diphosphate: step 6/9.</text>
</comment>
<comment type="subcellular location">
    <subcellularLocation>
        <location evidence="1">Cytoplasm</location>
    </subcellularLocation>
</comment>
<comment type="similarity">
    <text evidence="1">Belongs to the imidazoleglycerol-phosphate dehydratase family.</text>
</comment>
<protein>
    <recommendedName>
        <fullName evidence="1">Imidazoleglycerol-phosphate dehydratase</fullName>
        <shortName evidence="1">IGPD</shortName>
        <ecNumber evidence="1">4.2.1.19</ecNumber>
    </recommendedName>
</protein>
<evidence type="ECO:0000255" key="1">
    <source>
        <dbReference type="HAMAP-Rule" id="MF_00076"/>
    </source>
</evidence>
<organism>
    <name type="scientific">Listeria monocytogenes serotype 4a (strain HCC23)</name>
    <dbReference type="NCBI Taxonomy" id="552536"/>
    <lineage>
        <taxon>Bacteria</taxon>
        <taxon>Bacillati</taxon>
        <taxon>Bacillota</taxon>
        <taxon>Bacilli</taxon>
        <taxon>Bacillales</taxon>
        <taxon>Listeriaceae</taxon>
        <taxon>Listeria</taxon>
    </lineage>
</organism>
<proteinExistence type="inferred from homology"/>
<feature type="chain" id="PRO_1000190615" description="Imidazoleglycerol-phosphate dehydratase">
    <location>
        <begin position="1"/>
        <end position="194"/>
    </location>
</feature>